<keyword id="KW-0068">Autocatalytic cleavage</keyword>
<keyword id="KW-0963">Cytoplasm</keyword>
<keyword id="KW-0210">Decarboxylase</keyword>
<keyword id="KW-0456">Lyase</keyword>
<keyword id="KW-0566">Pantothenate biosynthesis</keyword>
<keyword id="KW-0670">Pyruvate</keyword>
<keyword id="KW-0704">Schiff base</keyword>
<keyword id="KW-0865">Zymogen</keyword>
<proteinExistence type="inferred from homology"/>
<gene>
    <name evidence="1" type="primary">panD</name>
    <name type="ordered locus">HY04AAS1_0774</name>
</gene>
<protein>
    <recommendedName>
        <fullName evidence="1">Aspartate 1-decarboxylase</fullName>
        <ecNumber evidence="1">4.1.1.11</ecNumber>
    </recommendedName>
    <alternativeName>
        <fullName evidence="1">Aspartate alpha-decarboxylase</fullName>
    </alternativeName>
    <component>
        <recommendedName>
            <fullName evidence="1">Aspartate 1-decarboxylase beta chain</fullName>
        </recommendedName>
    </component>
    <component>
        <recommendedName>
            <fullName evidence="1">Aspartate 1-decarboxylase alpha chain</fullName>
        </recommendedName>
    </component>
</protein>
<reference key="1">
    <citation type="journal article" date="2009" name="J. Bacteriol.">
        <title>Complete and draft genome sequences of six members of the Aquificales.</title>
        <authorList>
            <person name="Reysenbach A.-L."/>
            <person name="Hamamura N."/>
            <person name="Podar M."/>
            <person name="Griffiths E."/>
            <person name="Ferreira S."/>
            <person name="Hochstein R."/>
            <person name="Heidelberg J."/>
            <person name="Johnson J."/>
            <person name="Mead D."/>
            <person name="Pohorille A."/>
            <person name="Sarmiento M."/>
            <person name="Schweighofer K."/>
            <person name="Seshadri R."/>
            <person name="Voytek M.A."/>
        </authorList>
    </citation>
    <scope>NUCLEOTIDE SEQUENCE [LARGE SCALE GENOMIC DNA]</scope>
    <source>
        <strain>Y04AAS1</strain>
    </source>
</reference>
<dbReference type="EC" id="4.1.1.11" evidence="1"/>
<dbReference type="EMBL" id="CP001130">
    <property type="protein sequence ID" value="ACG57461.1"/>
    <property type="molecule type" value="Genomic_DNA"/>
</dbReference>
<dbReference type="RefSeq" id="WP_012513817.1">
    <property type="nucleotide sequence ID" value="NC_011126.1"/>
</dbReference>
<dbReference type="SMR" id="B4U8K0"/>
<dbReference type="STRING" id="380749.HY04AAS1_0774"/>
<dbReference type="KEGG" id="hya:HY04AAS1_0774"/>
<dbReference type="eggNOG" id="COG0853">
    <property type="taxonomic scope" value="Bacteria"/>
</dbReference>
<dbReference type="HOGENOM" id="CLU_115305_2_1_0"/>
<dbReference type="OrthoDB" id="9803983at2"/>
<dbReference type="UniPathway" id="UPA00028">
    <property type="reaction ID" value="UER00002"/>
</dbReference>
<dbReference type="GO" id="GO:0005829">
    <property type="term" value="C:cytosol"/>
    <property type="evidence" value="ECO:0007669"/>
    <property type="project" value="TreeGrafter"/>
</dbReference>
<dbReference type="GO" id="GO:0004068">
    <property type="term" value="F:aspartate 1-decarboxylase activity"/>
    <property type="evidence" value="ECO:0007669"/>
    <property type="project" value="UniProtKB-UniRule"/>
</dbReference>
<dbReference type="GO" id="GO:0006523">
    <property type="term" value="P:alanine biosynthetic process"/>
    <property type="evidence" value="ECO:0007669"/>
    <property type="project" value="InterPro"/>
</dbReference>
<dbReference type="GO" id="GO:0015940">
    <property type="term" value="P:pantothenate biosynthetic process"/>
    <property type="evidence" value="ECO:0007669"/>
    <property type="project" value="UniProtKB-UniRule"/>
</dbReference>
<dbReference type="CDD" id="cd06919">
    <property type="entry name" value="Asp_decarbox"/>
    <property type="match status" value="1"/>
</dbReference>
<dbReference type="Gene3D" id="2.40.40.20">
    <property type="match status" value="1"/>
</dbReference>
<dbReference type="HAMAP" id="MF_00446">
    <property type="entry name" value="PanD"/>
    <property type="match status" value="1"/>
</dbReference>
<dbReference type="InterPro" id="IPR009010">
    <property type="entry name" value="Asp_de-COase-like_dom_sf"/>
</dbReference>
<dbReference type="InterPro" id="IPR003190">
    <property type="entry name" value="Asp_decarbox"/>
</dbReference>
<dbReference type="NCBIfam" id="TIGR00223">
    <property type="entry name" value="panD"/>
    <property type="match status" value="1"/>
</dbReference>
<dbReference type="PANTHER" id="PTHR21012">
    <property type="entry name" value="ASPARTATE 1-DECARBOXYLASE"/>
    <property type="match status" value="1"/>
</dbReference>
<dbReference type="PANTHER" id="PTHR21012:SF0">
    <property type="entry name" value="ASPARTATE 1-DECARBOXYLASE"/>
    <property type="match status" value="1"/>
</dbReference>
<dbReference type="Pfam" id="PF02261">
    <property type="entry name" value="Asp_decarbox"/>
    <property type="match status" value="1"/>
</dbReference>
<dbReference type="PIRSF" id="PIRSF006246">
    <property type="entry name" value="Asp_decarbox"/>
    <property type="match status" value="1"/>
</dbReference>
<dbReference type="SUPFAM" id="SSF50692">
    <property type="entry name" value="ADC-like"/>
    <property type="match status" value="1"/>
</dbReference>
<evidence type="ECO:0000255" key="1">
    <source>
        <dbReference type="HAMAP-Rule" id="MF_00446"/>
    </source>
</evidence>
<organism>
    <name type="scientific">Hydrogenobaculum sp. (strain Y04AAS1)</name>
    <dbReference type="NCBI Taxonomy" id="380749"/>
    <lineage>
        <taxon>Bacteria</taxon>
        <taxon>Pseudomonadati</taxon>
        <taxon>Aquificota</taxon>
        <taxon>Aquificia</taxon>
        <taxon>Aquificales</taxon>
        <taxon>Aquificaceae</taxon>
        <taxon>Hydrogenobaculum</taxon>
    </lineage>
</organism>
<sequence length="125" mass="14267">MKRHILRAKIHRATVTGANLNYEGSISIDERLLEAGKFVVFEKVDIYNVNNGNRFSTYVIPGKPGEISLNGAAARLCMPGDIIIIASYAEVEEEELHHFRPYLVYVDDKNNILEVKRDMEHVFTF</sequence>
<accession>B4U8K0</accession>
<feature type="chain" id="PRO_1000124835" description="Aspartate 1-decarboxylase beta chain" evidence="1">
    <location>
        <begin position="1"/>
        <end position="24"/>
    </location>
</feature>
<feature type="chain" id="PRO_1000124836" description="Aspartate 1-decarboxylase alpha chain" evidence="1">
    <location>
        <begin position="25"/>
        <end position="125"/>
    </location>
</feature>
<feature type="active site" description="Schiff-base intermediate with substrate; via pyruvic acid" evidence="1">
    <location>
        <position position="25"/>
    </location>
</feature>
<feature type="active site" description="Proton donor" evidence="1">
    <location>
        <position position="58"/>
    </location>
</feature>
<feature type="binding site" evidence="1">
    <location>
        <position position="57"/>
    </location>
    <ligand>
        <name>substrate</name>
    </ligand>
</feature>
<feature type="binding site" evidence="1">
    <location>
        <begin position="71"/>
        <end position="73"/>
    </location>
    <ligand>
        <name>substrate</name>
    </ligand>
</feature>
<feature type="modified residue" description="Pyruvic acid (Ser)" evidence="1">
    <location>
        <position position="25"/>
    </location>
</feature>
<name>PAND_HYDS0</name>
<comment type="function">
    <text evidence="1">Catalyzes the pyruvoyl-dependent decarboxylation of aspartate to produce beta-alanine.</text>
</comment>
<comment type="catalytic activity">
    <reaction evidence="1">
        <text>L-aspartate + H(+) = beta-alanine + CO2</text>
        <dbReference type="Rhea" id="RHEA:19497"/>
        <dbReference type="ChEBI" id="CHEBI:15378"/>
        <dbReference type="ChEBI" id="CHEBI:16526"/>
        <dbReference type="ChEBI" id="CHEBI:29991"/>
        <dbReference type="ChEBI" id="CHEBI:57966"/>
        <dbReference type="EC" id="4.1.1.11"/>
    </reaction>
</comment>
<comment type="cofactor">
    <cofactor evidence="1">
        <name>pyruvate</name>
        <dbReference type="ChEBI" id="CHEBI:15361"/>
    </cofactor>
    <text evidence="1">Binds 1 pyruvoyl group covalently per subunit.</text>
</comment>
<comment type="pathway">
    <text evidence="1">Cofactor biosynthesis; (R)-pantothenate biosynthesis; beta-alanine from L-aspartate: step 1/1.</text>
</comment>
<comment type="subunit">
    <text evidence="1">Heterooctamer of four alpha and four beta subunits.</text>
</comment>
<comment type="subcellular location">
    <subcellularLocation>
        <location evidence="1">Cytoplasm</location>
    </subcellularLocation>
</comment>
<comment type="PTM">
    <text evidence="1">Is synthesized initially as an inactive proenzyme, which is activated by self-cleavage at a specific serine bond to produce a beta-subunit with a hydroxyl group at its C-terminus and an alpha-subunit with a pyruvoyl group at its N-terminus.</text>
</comment>
<comment type="similarity">
    <text evidence="1">Belongs to the PanD family.</text>
</comment>